<name>THIO_STAAC</name>
<protein>
    <recommendedName>
        <fullName>Thioredoxin</fullName>
        <shortName>Trx</shortName>
    </recommendedName>
</protein>
<organism>
    <name type="scientific">Staphylococcus aureus (strain COL)</name>
    <dbReference type="NCBI Taxonomy" id="93062"/>
    <lineage>
        <taxon>Bacteria</taxon>
        <taxon>Bacillati</taxon>
        <taxon>Bacillota</taxon>
        <taxon>Bacilli</taxon>
        <taxon>Bacillales</taxon>
        <taxon>Staphylococcaceae</taxon>
        <taxon>Staphylococcus</taxon>
    </lineage>
</organism>
<sequence length="104" mass="11440">MAIVKVTDADFDSKVESGVQLVDFWATWCGPCKMIAPVLEELAADYEGKADILKLDVDENPSTAAKYEVMSIPTLIVFKDGQPVDKVVGFQPKENLAEVLDKHL</sequence>
<proteinExistence type="inferred from homology"/>
<reference key="1">
    <citation type="journal article" date="2005" name="J. Bacteriol.">
        <title>Insights on evolution of virulence and resistance from the complete genome analysis of an early methicillin-resistant Staphylococcus aureus strain and a biofilm-producing methicillin-resistant Staphylococcus epidermidis strain.</title>
        <authorList>
            <person name="Gill S.R."/>
            <person name="Fouts D.E."/>
            <person name="Archer G.L."/>
            <person name="Mongodin E.F."/>
            <person name="DeBoy R.T."/>
            <person name="Ravel J."/>
            <person name="Paulsen I.T."/>
            <person name="Kolonay J.F."/>
            <person name="Brinkac L.M."/>
            <person name="Beanan M.J."/>
            <person name="Dodson R.J."/>
            <person name="Daugherty S.C."/>
            <person name="Madupu R."/>
            <person name="Angiuoli S.V."/>
            <person name="Durkin A.S."/>
            <person name="Haft D.H."/>
            <person name="Vamathevan J.J."/>
            <person name="Khouri H."/>
            <person name="Utterback T.R."/>
            <person name="Lee C."/>
            <person name="Dimitrov G."/>
            <person name="Jiang L."/>
            <person name="Qin H."/>
            <person name="Weidman J."/>
            <person name="Tran K."/>
            <person name="Kang K.H."/>
            <person name="Hance I.R."/>
            <person name="Nelson K.E."/>
            <person name="Fraser C.M."/>
        </authorList>
    </citation>
    <scope>NUCLEOTIDE SEQUENCE [LARGE SCALE GENOMIC DNA]</scope>
    <source>
        <strain>COL</strain>
    </source>
</reference>
<gene>
    <name type="primary">trxA</name>
    <name type="ordered locus">SACOL1155</name>
</gene>
<evidence type="ECO:0000250" key="1"/>
<evidence type="ECO:0000255" key="2">
    <source>
        <dbReference type="PROSITE-ProRule" id="PRU00691"/>
    </source>
</evidence>
<evidence type="ECO:0000305" key="3"/>
<feature type="chain" id="PRO_0000120125" description="Thioredoxin">
    <location>
        <begin position="1"/>
        <end position="104"/>
    </location>
</feature>
<feature type="domain" description="Thioredoxin" evidence="2">
    <location>
        <begin position="2"/>
        <end position="104"/>
    </location>
</feature>
<feature type="disulfide bond" description="Redox-active" evidence="2">
    <location>
        <begin position="29"/>
        <end position="32"/>
    </location>
</feature>
<dbReference type="EMBL" id="CP000046">
    <property type="protein sequence ID" value="AAW38034.1"/>
    <property type="molecule type" value="Genomic_DNA"/>
</dbReference>
<dbReference type="RefSeq" id="WP_001018928.1">
    <property type="nucleotide sequence ID" value="NZ_JBGOFO010000002.1"/>
</dbReference>
<dbReference type="SMR" id="Q5HGT9"/>
<dbReference type="GeneID" id="98345462"/>
<dbReference type="KEGG" id="sac:SACOL1155"/>
<dbReference type="HOGENOM" id="CLU_090389_10_2_9"/>
<dbReference type="Proteomes" id="UP000000530">
    <property type="component" value="Chromosome"/>
</dbReference>
<dbReference type="GO" id="GO:0005829">
    <property type="term" value="C:cytosol"/>
    <property type="evidence" value="ECO:0007669"/>
    <property type="project" value="TreeGrafter"/>
</dbReference>
<dbReference type="GO" id="GO:0015035">
    <property type="term" value="F:protein-disulfide reductase activity"/>
    <property type="evidence" value="ECO:0007669"/>
    <property type="project" value="InterPro"/>
</dbReference>
<dbReference type="GO" id="GO:0045454">
    <property type="term" value="P:cell redox homeostasis"/>
    <property type="evidence" value="ECO:0007669"/>
    <property type="project" value="TreeGrafter"/>
</dbReference>
<dbReference type="CDD" id="cd02947">
    <property type="entry name" value="TRX_family"/>
    <property type="match status" value="1"/>
</dbReference>
<dbReference type="FunFam" id="3.40.30.10:FF:000001">
    <property type="entry name" value="Thioredoxin"/>
    <property type="match status" value="1"/>
</dbReference>
<dbReference type="Gene3D" id="3.40.30.10">
    <property type="entry name" value="Glutaredoxin"/>
    <property type="match status" value="1"/>
</dbReference>
<dbReference type="InterPro" id="IPR005746">
    <property type="entry name" value="Thioredoxin"/>
</dbReference>
<dbReference type="InterPro" id="IPR036249">
    <property type="entry name" value="Thioredoxin-like_sf"/>
</dbReference>
<dbReference type="InterPro" id="IPR017937">
    <property type="entry name" value="Thioredoxin_CS"/>
</dbReference>
<dbReference type="InterPro" id="IPR013766">
    <property type="entry name" value="Thioredoxin_domain"/>
</dbReference>
<dbReference type="NCBIfam" id="TIGR01068">
    <property type="entry name" value="thioredoxin"/>
    <property type="match status" value="1"/>
</dbReference>
<dbReference type="PANTHER" id="PTHR45663">
    <property type="entry name" value="GEO12009P1"/>
    <property type="match status" value="1"/>
</dbReference>
<dbReference type="PANTHER" id="PTHR45663:SF11">
    <property type="entry name" value="GEO12009P1"/>
    <property type="match status" value="1"/>
</dbReference>
<dbReference type="Pfam" id="PF00085">
    <property type="entry name" value="Thioredoxin"/>
    <property type="match status" value="1"/>
</dbReference>
<dbReference type="PIRSF" id="PIRSF000077">
    <property type="entry name" value="Thioredoxin"/>
    <property type="match status" value="1"/>
</dbReference>
<dbReference type="PRINTS" id="PR00421">
    <property type="entry name" value="THIOREDOXIN"/>
</dbReference>
<dbReference type="SUPFAM" id="SSF52833">
    <property type="entry name" value="Thioredoxin-like"/>
    <property type="match status" value="1"/>
</dbReference>
<dbReference type="PROSITE" id="PS00194">
    <property type="entry name" value="THIOREDOXIN_1"/>
    <property type="match status" value="1"/>
</dbReference>
<dbReference type="PROSITE" id="PS51352">
    <property type="entry name" value="THIOREDOXIN_2"/>
    <property type="match status" value="1"/>
</dbReference>
<keyword id="KW-1015">Disulfide bond</keyword>
<keyword id="KW-0249">Electron transport</keyword>
<keyword id="KW-0676">Redox-active center</keyword>
<keyword id="KW-0813">Transport</keyword>
<comment type="function">
    <text evidence="1">Component of the thioredoxin-thioredoxin reductase system. Participates in various redox reactions through the reversible oxidation of its active center dithiol to a disulfide and catalyzes dithiol-disulfide exchange reactions (By similarity).</text>
</comment>
<comment type="similarity">
    <text evidence="3">Belongs to the thioredoxin family.</text>
</comment>
<accession>Q5HGT9</accession>